<name>EOLA2_HUMAN</name>
<dbReference type="EMBL" id="L43575">
    <property type="status" value="NOT_ANNOTATED_CDS"/>
    <property type="molecule type" value="mRNA"/>
</dbReference>
<dbReference type="EMBL" id="BX927209">
    <property type="status" value="NOT_ANNOTATED_CDS"/>
    <property type="molecule type" value="Genomic_DNA"/>
</dbReference>
<dbReference type="EMBL" id="BC009523">
    <property type="protein sequence ID" value="AAH09523.1"/>
    <property type="molecule type" value="mRNA"/>
</dbReference>
<dbReference type="CCDS" id="CCDS35426.1"/>
<dbReference type="RefSeq" id="NP_001013867.1">
    <property type="nucleotide sequence ID" value="NM_001013845.2"/>
</dbReference>
<dbReference type="RefSeq" id="XP_005274755.1">
    <property type="nucleotide sequence ID" value="XM_005274698.3"/>
</dbReference>
<dbReference type="RefSeq" id="XP_005274756.1">
    <property type="nucleotide sequence ID" value="XM_005274699.3"/>
</dbReference>
<dbReference type="RefSeq" id="XP_005274757.1">
    <property type="nucleotide sequence ID" value="XM_005274700.3"/>
</dbReference>
<dbReference type="RefSeq" id="XP_005274758.1">
    <property type="nucleotide sequence ID" value="XM_005274701.4"/>
</dbReference>
<dbReference type="RefSeq" id="XP_005274759.1">
    <property type="nucleotide sequence ID" value="XM_005274702.4"/>
</dbReference>
<dbReference type="RefSeq" id="XP_006724889.1">
    <property type="nucleotide sequence ID" value="XM_006724826.4"/>
</dbReference>
<dbReference type="RefSeq" id="XP_011529482.1">
    <property type="nucleotide sequence ID" value="XM_011531180.3"/>
</dbReference>
<dbReference type="RefSeq" id="XP_016885074.1">
    <property type="nucleotide sequence ID" value="XM_017029585.3"/>
</dbReference>
<dbReference type="RefSeq" id="XP_016885075.1">
    <property type="nucleotide sequence ID" value="XM_017029586.1"/>
</dbReference>
<dbReference type="RefSeq" id="XP_016885076.1">
    <property type="nucleotide sequence ID" value="XM_017029587.1"/>
</dbReference>
<dbReference type="RefSeq" id="XP_016885077.1">
    <property type="nucleotide sequence ID" value="XM_017029588.3"/>
</dbReference>
<dbReference type="RefSeq" id="XP_016885078.1">
    <property type="nucleotide sequence ID" value="XM_017029589.2"/>
</dbReference>
<dbReference type="RefSeq" id="XP_047298130.1">
    <property type="nucleotide sequence ID" value="XM_047442174.1"/>
</dbReference>
<dbReference type="RefSeq" id="XP_047298131.1">
    <property type="nucleotide sequence ID" value="XM_047442175.1"/>
</dbReference>
<dbReference type="RefSeq" id="XP_047298132.1">
    <property type="nucleotide sequence ID" value="XM_047442176.1"/>
</dbReference>
<dbReference type="RefSeq" id="XP_054183197.1">
    <property type="nucleotide sequence ID" value="XM_054327222.1"/>
</dbReference>
<dbReference type="RefSeq" id="XP_054183198.1">
    <property type="nucleotide sequence ID" value="XM_054327223.1"/>
</dbReference>
<dbReference type="RefSeq" id="XP_054183199.1">
    <property type="nucleotide sequence ID" value="XM_054327224.1"/>
</dbReference>
<dbReference type="RefSeq" id="XP_054183200.1">
    <property type="nucleotide sequence ID" value="XM_054327225.1"/>
</dbReference>
<dbReference type="RefSeq" id="XP_054183201.1">
    <property type="nucleotide sequence ID" value="XM_054327226.1"/>
</dbReference>
<dbReference type="RefSeq" id="XP_054183202.1">
    <property type="nucleotide sequence ID" value="XM_054327227.1"/>
</dbReference>
<dbReference type="RefSeq" id="XP_054183203.1">
    <property type="nucleotide sequence ID" value="XM_054327228.1"/>
</dbReference>
<dbReference type="RefSeq" id="XP_054183204.1">
    <property type="nucleotide sequence ID" value="XM_054327229.1"/>
</dbReference>
<dbReference type="RefSeq" id="XP_054183205.1">
    <property type="nucleotide sequence ID" value="XM_054327230.1"/>
</dbReference>
<dbReference type="RefSeq" id="XP_054183206.1">
    <property type="nucleotide sequence ID" value="XM_054327231.1"/>
</dbReference>
<dbReference type="RefSeq" id="XP_054183207.1">
    <property type="nucleotide sequence ID" value="XM_054327232.1"/>
</dbReference>
<dbReference type="RefSeq" id="XP_054183208.1">
    <property type="nucleotide sequence ID" value="XM_054327233.1"/>
</dbReference>
<dbReference type="RefSeq" id="XP_054183209.1">
    <property type="nucleotide sequence ID" value="XM_054327234.1"/>
</dbReference>
<dbReference type="RefSeq" id="XP_054183210.1">
    <property type="nucleotide sequence ID" value="XM_054327235.1"/>
</dbReference>
<dbReference type="RefSeq" id="XP_054183211.1">
    <property type="nucleotide sequence ID" value="XM_054327236.1"/>
</dbReference>
<dbReference type="SMR" id="Q96DE9"/>
<dbReference type="FunCoup" id="Q96DE9">
    <property type="interactions" value="83"/>
</dbReference>
<dbReference type="STRING" id="9606.ENSP00000359434"/>
<dbReference type="BioMuta" id="CXorf40B"/>
<dbReference type="DMDM" id="68052373"/>
<dbReference type="jPOST" id="Q96DE9"/>
<dbReference type="MassIVE" id="Q96DE9"/>
<dbReference type="PaxDb" id="9606-ENSP00000359434"/>
<dbReference type="PeptideAtlas" id="Q96DE9"/>
<dbReference type="Pumba" id="Q96DE9"/>
<dbReference type="Antibodypedia" id="76734">
    <property type="antibodies" value="22 antibodies from 5 providers"/>
</dbReference>
<dbReference type="DNASU" id="541578"/>
<dbReference type="Ensembl" id="ENST00000355203.6">
    <property type="protein sequence ID" value="ENSP00000347339.2"/>
    <property type="gene ID" value="ENSG00000197021.9"/>
</dbReference>
<dbReference type="Ensembl" id="ENST00000370404.5">
    <property type="protein sequence ID" value="ENSP00000359432.1"/>
    <property type="gene ID" value="ENSG00000197021.9"/>
</dbReference>
<dbReference type="Ensembl" id="ENST00000370406.8">
    <property type="protein sequence ID" value="ENSP00000359434.3"/>
    <property type="gene ID" value="ENSG00000197021.9"/>
</dbReference>
<dbReference type="GeneID" id="541578"/>
<dbReference type="KEGG" id="hsa:541578"/>
<dbReference type="MANE-Select" id="ENST00000370406.8">
    <property type="protein sequence ID" value="ENSP00000359434.3"/>
    <property type="RefSeq nucleotide sequence ID" value="NM_001013845.2"/>
    <property type="RefSeq protein sequence ID" value="NP_001013867.1"/>
</dbReference>
<dbReference type="UCSC" id="uc004fdy.4">
    <property type="organism name" value="human"/>
</dbReference>
<dbReference type="AGR" id="HGNC:17402"/>
<dbReference type="CTD" id="541578"/>
<dbReference type="GeneCards" id="EOLA2"/>
<dbReference type="HGNC" id="HGNC:17402">
    <property type="gene designation" value="EOLA2"/>
</dbReference>
<dbReference type="HPA" id="ENSG00000197021">
    <property type="expression patterns" value="Low tissue specificity"/>
</dbReference>
<dbReference type="neXtProt" id="NX_Q96DE9"/>
<dbReference type="OpenTargets" id="ENSG00000197021"/>
<dbReference type="VEuPathDB" id="HostDB:ENSG00000197021"/>
<dbReference type="eggNOG" id="ENOG502RZ9S">
    <property type="taxonomic scope" value="Eukaryota"/>
</dbReference>
<dbReference type="GeneTree" id="ENSGT00390000012182"/>
<dbReference type="InParanoid" id="Q96DE9"/>
<dbReference type="OMA" id="WTPVFQE"/>
<dbReference type="OrthoDB" id="2865258at2759"/>
<dbReference type="PAN-GO" id="Q96DE9">
    <property type="GO annotations" value="0 GO annotations based on evolutionary models"/>
</dbReference>
<dbReference type="PhylomeDB" id="Q96DE9"/>
<dbReference type="TreeFam" id="TF332845"/>
<dbReference type="PathwayCommons" id="Q96DE9"/>
<dbReference type="SignaLink" id="Q96DE9"/>
<dbReference type="BioGRID-ORCS" id="541578">
    <property type="hits" value="18 hits in 664 CRISPR screens"/>
</dbReference>
<dbReference type="ChiTaRS" id="CXorf40B">
    <property type="organism name" value="human"/>
</dbReference>
<dbReference type="GenomeRNAi" id="541578"/>
<dbReference type="Pharos" id="Q96DE9">
    <property type="development level" value="Tdark"/>
</dbReference>
<dbReference type="PRO" id="PR:Q96DE9"/>
<dbReference type="Proteomes" id="UP000005640">
    <property type="component" value="Chromosome X"/>
</dbReference>
<dbReference type="RNAct" id="Q96DE9">
    <property type="molecule type" value="protein"/>
</dbReference>
<dbReference type="Bgee" id="ENSG00000197021">
    <property type="expression patterns" value="Expressed in granulocyte and 98 other cell types or tissues"/>
</dbReference>
<dbReference type="ExpressionAtlas" id="Q96DE9">
    <property type="expression patterns" value="baseline and differential"/>
</dbReference>
<dbReference type="GO" id="GO:0005739">
    <property type="term" value="C:mitochondrion"/>
    <property type="evidence" value="ECO:0006056"/>
    <property type="project" value="FlyBase"/>
</dbReference>
<dbReference type="Gene3D" id="2.30.130.30">
    <property type="entry name" value="Hypothetical protein"/>
    <property type="match status" value="1"/>
</dbReference>
<dbReference type="InterPro" id="IPR007374">
    <property type="entry name" value="ASCH_domain"/>
</dbReference>
<dbReference type="InterPro" id="IPR033615">
    <property type="entry name" value="EOLA1/EOLA2"/>
</dbReference>
<dbReference type="InterPro" id="IPR015947">
    <property type="entry name" value="PUA-like_sf"/>
</dbReference>
<dbReference type="PANTHER" id="PTHR31666">
    <property type="entry name" value="PROTEIN CXORF40A-RELATED"/>
    <property type="match status" value="1"/>
</dbReference>
<dbReference type="PANTHER" id="PTHR31666:SF0">
    <property type="entry name" value="PROTEIN EOLA1-RELATED"/>
    <property type="match status" value="1"/>
</dbReference>
<dbReference type="SMART" id="SM01022">
    <property type="entry name" value="ASCH"/>
    <property type="match status" value="1"/>
</dbReference>
<dbReference type="SUPFAM" id="SSF88697">
    <property type="entry name" value="PUA domain-like"/>
    <property type="match status" value="1"/>
</dbReference>
<reference key="1">
    <citation type="journal article" date="1995" name="Genome Res.">
        <title>130 kb of DNA sequence reveals two new genes and a regional duplication distal to the human iduronate-2-sulfate sulfatase locus.</title>
        <authorList>
            <person name="Timms K.M."/>
            <person name="Lu F."/>
            <person name="Shen Y."/>
            <person name="Pierson C.A."/>
            <person name="Muzny D.M."/>
            <person name="Gu Y."/>
            <person name="Nelson D.L."/>
            <person name="Gibbs R.A."/>
        </authorList>
    </citation>
    <scope>NUCLEOTIDE SEQUENCE [MRNA]</scope>
</reference>
<reference key="2">
    <citation type="journal article" date="2005" name="Nature">
        <title>The DNA sequence of the human X chromosome.</title>
        <authorList>
            <person name="Ross M.T."/>
            <person name="Grafham D.V."/>
            <person name="Coffey A.J."/>
            <person name="Scherer S."/>
            <person name="McLay K."/>
            <person name="Muzny D."/>
            <person name="Platzer M."/>
            <person name="Howell G.R."/>
            <person name="Burrows C."/>
            <person name="Bird C.P."/>
            <person name="Frankish A."/>
            <person name="Lovell F.L."/>
            <person name="Howe K.L."/>
            <person name="Ashurst J.L."/>
            <person name="Fulton R.S."/>
            <person name="Sudbrak R."/>
            <person name="Wen G."/>
            <person name="Jones M.C."/>
            <person name="Hurles M.E."/>
            <person name="Andrews T.D."/>
            <person name="Scott C.E."/>
            <person name="Searle S."/>
            <person name="Ramser J."/>
            <person name="Whittaker A."/>
            <person name="Deadman R."/>
            <person name="Carter N.P."/>
            <person name="Hunt S.E."/>
            <person name="Chen R."/>
            <person name="Cree A."/>
            <person name="Gunaratne P."/>
            <person name="Havlak P."/>
            <person name="Hodgson A."/>
            <person name="Metzker M.L."/>
            <person name="Richards S."/>
            <person name="Scott G."/>
            <person name="Steffen D."/>
            <person name="Sodergren E."/>
            <person name="Wheeler D.A."/>
            <person name="Worley K.C."/>
            <person name="Ainscough R."/>
            <person name="Ambrose K.D."/>
            <person name="Ansari-Lari M.A."/>
            <person name="Aradhya S."/>
            <person name="Ashwell R.I."/>
            <person name="Babbage A.K."/>
            <person name="Bagguley C.L."/>
            <person name="Ballabio A."/>
            <person name="Banerjee R."/>
            <person name="Barker G.E."/>
            <person name="Barlow K.F."/>
            <person name="Barrett I.P."/>
            <person name="Bates K.N."/>
            <person name="Beare D.M."/>
            <person name="Beasley H."/>
            <person name="Beasley O."/>
            <person name="Beck A."/>
            <person name="Bethel G."/>
            <person name="Blechschmidt K."/>
            <person name="Brady N."/>
            <person name="Bray-Allen S."/>
            <person name="Bridgeman A.M."/>
            <person name="Brown A.J."/>
            <person name="Brown M.J."/>
            <person name="Bonnin D."/>
            <person name="Bruford E.A."/>
            <person name="Buhay C."/>
            <person name="Burch P."/>
            <person name="Burford D."/>
            <person name="Burgess J."/>
            <person name="Burrill W."/>
            <person name="Burton J."/>
            <person name="Bye J.M."/>
            <person name="Carder C."/>
            <person name="Carrel L."/>
            <person name="Chako J."/>
            <person name="Chapman J.C."/>
            <person name="Chavez D."/>
            <person name="Chen E."/>
            <person name="Chen G."/>
            <person name="Chen Y."/>
            <person name="Chen Z."/>
            <person name="Chinault C."/>
            <person name="Ciccodicola A."/>
            <person name="Clark S.Y."/>
            <person name="Clarke G."/>
            <person name="Clee C.M."/>
            <person name="Clegg S."/>
            <person name="Clerc-Blankenburg K."/>
            <person name="Clifford K."/>
            <person name="Cobley V."/>
            <person name="Cole C.G."/>
            <person name="Conquer J.S."/>
            <person name="Corby N."/>
            <person name="Connor R.E."/>
            <person name="David R."/>
            <person name="Davies J."/>
            <person name="Davis C."/>
            <person name="Davis J."/>
            <person name="Delgado O."/>
            <person name="Deshazo D."/>
            <person name="Dhami P."/>
            <person name="Ding Y."/>
            <person name="Dinh H."/>
            <person name="Dodsworth S."/>
            <person name="Draper H."/>
            <person name="Dugan-Rocha S."/>
            <person name="Dunham A."/>
            <person name="Dunn M."/>
            <person name="Durbin K.J."/>
            <person name="Dutta I."/>
            <person name="Eades T."/>
            <person name="Ellwood M."/>
            <person name="Emery-Cohen A."/>
            <person name="Errington H."/>
            <person name="Evans K.L."/>
            <person name="Faulkner L."/>
            <person name="Francis F."/>
            <person name="Frankland J."/>
            <person name="Fraser A.E."/>
            <person name="Galgoczy P."/>
            <person name="Gilbert J."/>
            <person name="Gill R."/>
            <person name="Gloeckner G."/>
            <person name="Gregory S.G."/>
            <person name="Gribble S."/>
            <person name="Griffiths C."/>
            <person name="Grocock R."/>
            <person name="Gu Y."/>
            <person name="Gwilliam R."/>
            <person name="Hamilton C."/>
            <person name="Hart E.A."/>
            <person name="Hawes A."/>
            <person name="Heath P.D."/>
            <person name="Heitmann K."/>
            <person name="Hennig S."/>
            <person name="Hernandez J."/>
            <person name="Hinzmann B."/>
            <person name="Ho S."/>
            <person name="Hoffs M."/>
            <person name="Howden P.J."/>
            <person name="Huckle E.J."/>
            <person name="Hume J."/>
            <person name="Hunt P.J."/>
            <person name="Hunt A.R."/>
            <person name="Isherwood J."/>
            <person name="Jacob L."/>
            <person name="Johnson D."/>
            <person name="Jones S."/>
            <person name="de Jong P.J."/>
            <person name="Joseph S.S."/>
            <person name="Keenan S."/>
            <person name="Kelly S."/>
            <person name="Kershaw J.K."/>
            <person name="Khan Z."/>
            <person name="Kioschis P."/>
            <person name="Klages S."/>
            <person name="Knights A.J."/>
            <person name="Kosiura A."/>
            <person name="Kovar-Smith C."/>
            <person name="Laird G.K."/>
            <person name="Langford C."/>
            <person name="Lawlor S."/>
            <person name="Leversha M."/>
            <person name="Lewis L."/>
            <person name="Liu W."/>
            <person name="Lloyd C."/>
            <person name="Lloyd D.M."/>
            <person name="Loulseged H."/>
            <person name="Loveland J.E."/>
            <person name="Lovell J.D."/>
            <person name="Lozado R."/>
            <person name="Lu J."/>
            <person name="Lyne R."/>
            <person name="Ma J."/>
            <person name="Maheshwari M."/>
            <person name="Matthews L.H."/>
            <person name="McDowall J."/>
            <person name="McLaren S."/>
            <person name="McMurray A."/>
            <person name="Meidl P."/>
            <person name="Meitinger T."/>
            <person name="Milne S."/>
            <person name="Miner G."/>
            <person name="Mistry S.L."/>
            <person name="Morgan M."/>
            <person name="Morris S."/>
            <person name="Mueller I."/>
            <person name="Mullikin J.C."/>
            <person name="Nguyen N."/>
            <person name="Nordsiek G."/>
            <person name="Nyakatura G."/>
            <person name="O'dell C.N."/>
            <person name="Okwuonu G."/>
            <person name="Palmer S."/>
            <person name="Pandian R."/>
            <person name="Parker D."/>
            <person name="Parrish J."/>
            <person name="Pasternak S."/>
            <person name="Patel D."/>
            <person name="Pearce A.V."/>
            <person name="Pearson D.M."/>
            <person name="Pelan S.E."/>
            <person name="Perez L."/>
            <person name="Porter K.M."/>
            <person name="Ramsey Y."/>
            <person name="Reichwald K."/>
            <person name="Rhodes S."/>
            <person name="Ridler K.A."/>
            <person name="Schlessinger D."/>
            <person name="Schueler M.G."/>
            <person name="Sehra H.K."/>
            <person name="Shaw-Smith C."/>
            <person name="Shen H."/>
            <person name="Sheridan E.M."/>
            <person name="Shownkeen R."/>
            <person name="Skuce C.D."/>
            <person name="Smith M.L."/>
            <person name="Sotheran E.C."/>
            <person name="Steingruber H.E."/>
            <person name="Steward C.A."/>
            <person name="Storey R."/>
            <person name="Swann R.M."/>
            <person name="Swarbreck D."/>
            <person name="Tabor P.E."/>
            <person name="Taudien S."/>
            <person name="Taylor T."/>
            <person name="Teague B."/>
            <person name="Thomas K."/>
            <person name="Thorpe A."/>
            <person name="Timms K."/>
            <person name="Tracey A."/>
            <person name="Trevanion S."/>
            <person name="Tromans A.C."/>
            <person name="d'Urso M."/>
            <person name="Verduzco D."/>
            <person name="Villasana D."/>
            <person name="Waldron L."/>
            <person name="Wall M."/>
            <person name="Wang Q."/>
            <person name="Warren J."/>
            <person name="Warry G.L."/>
            <person name="Wei X."/>
            <person name="West A."/>
            <person name="Whitehead S.L."/>
            <person name="Whiteley M.N."/>
            <person name="Wilkinson J.E."/>
            <person name="Willey D.L."/>
            <person name="Williams G."/>
            <person name="Williams L."/>
            <person name="Williamson A."/>
            <person name="Williamson H."/>
            <person name="Wilming L."/>
            <person name="Woodmansey R.L."/>
            <person name="Wray P.W."/>
            <person name="Yen J."/>
            <person name="Zhang J."/>
            <person name="Zhou J."/>
            <person name="Zoghbi H."/>
            <person name="Zorilla S."/>
            <person name="Buck D."/>
            <person name="Reinhardt R."/>
            <person name="Poustka A."/>
            <person name="Rosenthal A."/>
            <person name="Lehrach H."/>
            <person name="Meindl A."/>
            <person name="Minx P.J."/>
            <person name="Hillier L.W."/>
            <person name="Willard H.F."/>
            <person name="Wilson R.K."/>
            <person name="Waterston R.H."/>
            <person name="Rice C.M."/>
            <person name="Vaudin M."/>
            <person name="Coulson A."/>
            <person name="Nelson D.L."/>
            <person name="Weinstock G."/>
            <person name="Sulston J.E."/>
            <person name="Durbin R.M."/>
            <person name="Hubbard T."/>
            <person name="Gibbs R.A."/>
            <person name="Beck S."/>
            <person name="Rogers J."/>
            <person name="Bentley D.R."/>
        </authorList>
    </citation>
    <scope>NUCLEOTIDE SEQUENCE [LARGE SCALE GENOMIC DNA]</scope>
</reference>
<reference key="3">
    <citation type="journal article" date="2004" name="Genome Res.">
        <title>The status, quality, and expansion of the NIH full-length cDNA project: the Mammalian Gene Collection (MGC).</title>
        <authorList>
            <consortium name="The MGC Project Team"/>
        </authorList>
    </citation>
    <scope>NUCLEOTIDE SEQUENCE [LARGE SCALE MRNA]</scope>
    <source>
        <tissue>Lung</tissue>
    </source>
</reference>
<proteinExistence type="evidence at transcript level"/>
<accession>Q96DE9</accession>
<sequence length="158" mass="17780">MKFGCLSFRQPYAGFVLNGIKTVETRWRPLLSSQRNCTIAVHIAHRDWEGDACRELLVERLGMTPAQIQALLRKGEKFGRGVIAGLVDIGETLQCPEDLTPDEVVELENQAALTNLKQKYLTVISNPRWLLEPIPRKGGKDVFQVDIPEHLIPLGHEV</sequence>
<comment type="similarity">
    <text evidence="2">Belongs to the EOLA family.</text>
</comment>
<evidence type="ECO:0000255" key="1"/>
<evidence type="ECO:0000305" key="2"/>
<evidence type="ECO:0000312" key="3">
    <source>
        <dbReference type="HGNC" id="HGNC:17402"/>
    </source>
</evidence>
<keyword id="KW-1185">Reference proteome</keyword>
<gene>
    <name evidence="3" type="primary">EOLA2</name>
    <name type="synonym">CXorf40B</name>
</gene>
<feature type="chain" id="PRO_0000079741" description="Protein EOLA2">
    <location>
        <begin position="1"/>
        <end position="158"/>
    </location>
</feature>
<feature type="domain" description="ASCH" evidence="1">
    <location>
        <begin position="6"/>
        <end position="92"/>
    </location>
</feature>
<protein>
    <recommendedName>
        <fullName evidence="2">Protein EOLA2</fullName>
    </recommendedName>
    <alternativeName>
        <fullName>Protein CXorf40B</fullName>
    </alternativeName>
</protein>
<organism>
    <name type="scientific">Homo sapiens</name>
    <name type="common">Human</name>
    <dbReference type="NCBI Taxonomy" id="9606"/>
    <lineage>
        <taxon>Eukaryota</taxon>
        <taxon>Metazoa</taxon>
        <taxon>Chordata</taxon>
        <taxon>Craniata</taxon>
        <taxon>Vertebrata</taxon>
        <taxon>Euteleostomi</taxon>
        <taxon>Mammalia</taxon>
        <taxon>Eutheria</taxon>
        <taxon>Euarchontoglires</taxon>
        <taxon>Primates</taxon>
        <taxon>Haplorrhini</taxon>
        <taxon>Catarrhini</taxon>
        <taxon>Hominidae</taxon>
        <taxon>Homo</taxon>
    </lineage>
</organism>